<protein>
    <recommendedName>
        <fullName evidence="1">Adenine phosphoribosyltransferase</fullName>
        <shortName evidence="1">APRT</shortName>
        <ecNumber evidence="1">2.4.2.7</ecNumber>
    </recommendedName>
</protein>
<reference key="1">
    <citation type="journal article" date="2005" name="Nucleic Acids Res.">
        <title>The genome sequence of Salmonella enterica serovar Choleraesuis, a highly invasive and resistant zoonotic pathogen.</title>
        <authorList>
            <person name="Chiu C.-H."/>
            <person name="Tang P."/>
            <person name="Chu C."/>
            <person name="Hu S."/>
            <person name="Bao Q."/>
            <person name="Yu J."/>
            <person name="Chou Y.-Y."/>
            <person name="Wang H.-S."/>
            <person name="Lee Y.-S."/>
        </authorList>
    </citation>
    <scope>NUCLEOTIDE SEQUENCE [LARGE SCALE GENOMIC DNA]</scope>
    <source>
        <strain>SC-B67</strain>
    </source>
</reference>
<evidence type="ECO:0000255" key="1">
    <source>
        <dbReference type="HAMAP-Rule" id="MF_00004"/>
    </source>
</evidence>
<comment type="function">
    <text evidence="1">Catalyzes a salvage reaction resulting in the formation of AMP, that is energically less costly than de novo synthesis.</text>
</comment>
<comment type="catalytic activity">
    <reaction evidence="1">
        <text>AMP + diphosphate = 5-phospho-alpha-D-ribose 1-diphosphate + adenine</text>
        <dbReference type="Rhea" id="RHEA:16609"/>
        <dbReference type="ChEBI" id="CHEBI:16708"/>
        <dbReference type="ChEBI" id="CHEBI:33019"/>
        <dbReference type="ChEBI" id="CHEBI:58017"/>
        <dbReference type="ChEBI" id="CHEBI:456215"/>
        <dbReference type="EC" id="2.4.2.7"/>
    </reaction>
</comment>
<comment type="pathway">
    <text evidence="1">Purine metabolism; AMP biosynthesis via salvage pathway; AMP from adenine: step 1/1.</text>
</comment>
<comment type="subunit">
    <text evidence="1">Homodimer.</text>
</comment>
<comment type="subcellular location">
    <subcellularLocation>
        <location evidence="1">Cytoplasm</location>
    </subcellularLocation>
</comment>
<comment type="similarity">
    <text evidence="1">Belongs to the purine/pyrimidine phosphoribosyltransferase family.</text>
</comment>
<dbReference type="EC" id="2.4.2.7" evidence="1"/>
<dbReference type="EMBL" id="AE017220">
    <property type="protein sequence ID" value="AAX64430.1"/>
    <property type="molecule type" value="Genomic_DNA"/>
</dbReference>
<dbReference type="RefSeq" id="WP_000127350.1">
    <property type="nucleotide sequence ID" value="NC_006905.1"/>
</dbReference>
<dbReference type="SMR" id="Q57S81"/>
<dbReference type="KEGG" id="sec:SCH_0524"/>
<dbReference type="HOGENOM" id="CLU_063339_3_0_6"/>
<dbReference type="UniPathway" id="UPA00588">
    <property type="reaction ID" value="UER00646"/>
</dbReference>
<dbReference type="Proteomes" id="UP000000538">
    <property type="component" value="Chromosome"/>
</dbReference>
<dbReference type="GO" id="GO:0005829">
    <property type="term" value="C:cytosol"/>
    <property type="evidence" value="ECO:0007669"/>
    <property type="project" value="TreeGrafter"/>
</dbReference>
<dbReference type="GO" id="GO:0003999">
    <property type="term" value="F:adenine phosphoribosyltransferase activity"/>
    <property type="evidence" value="ECO:0007669"/>
    <property type="project" value="UniProtKB-UniRule"/>
</dbReference>
<dbReference type="GO" id="GO:0006168">
    <property type="term" value="P:adenine salvage"/>
    <property type="evidence" value="ECO:0007669"/>
    <property type="project" value="InterPro"/>
</dbReference>
<dbReference type="GO" id="GO:0044209">
    <property type="term" value="P:AMP salvage"/>
    <property type="evidence" value="ECO:0007669"/>
    <property type="project" value="UniProtKB-UniRule"/>
</dbReference>
<dbReference type="GO" id="GO:0006166">
    <property type="term" value="P:purine ribonucleoside salvage"/>
    <property type="evidence" value="ECO:0007669"/>
    <property type="project" value="UniProtKB-KW"/>
</dbReference>
<dbReference type="CDD" id="cd06223">
    <property type="entry name" value="PRTases_typeI"/>
    <property type="match status" value="1"/>
</dbReference>
<dbReference type="FunFam" id="3.40.50.2020:FF:000004">
    <property type="entry name" value="Adenine phosphoribosyltransferase"/>
    <property type="match status" value="1"/>
</dbReference>
<dbReference type="Gene3D" id="3.40.50.2020">
    <property type="match status" value="1"/>
</dbReference>
<dbReference type="HAMAP" id="MF_00004">
    <property type="entry name" value="Aden_phosphoribosyltr"/>
    <property type="match status" value="1"/>
</dbReference>
<dbReference type="InterPro" id="IPR005764">
    <property type="entry name" value="Ade_phspho_trans"/>
</dbReference>
<dbReference type="InterPro" id="IPR050120">
    <property type="entry name" value="Adenine_PRTase"/>
</dbReference>
<dbReference type="InterPro" id="IPR000836">
    <property type="entry name" value="PRibTrfase_dom"/>
</dbReference>
<dbReference type="InterPro" id="IPR029057">
    <property type="entry name" value="PRTase-like"/>
</dbReference>
<dbReference type="NCBIfam" id="TIGR01090">
    <property type="entry name" value="apt"/>
    <property type="match status" value="1"/>
</dbReference>
<dbReference type="NCBIfam" id="NF002632">
    <property type="entry name" value="PRK02304.1-1"/>
    <property type="match status" value="1"/>
</dbReference>
<dbReference type="NCBIfam" id="NF002634">
    <property type="entry name" value="PRK02304.1-3"/>
    <property type="match status" value="1"/>
</dbReference>
<dbReference type="NCBIfam" id="NF002636">
    <property type="entry name" value="PRK02304.1-5"/>
    <property type="match status" value="1"/>
</dbReference>
<dbReference type="PANTHER" id="PTHR11776">
    <property type="entry name" value="ADENINE PHOSPHORIBOSYLTRANSFERASE"/>
    <property type="match status" value="1"/>
</dbReference>
<dbReference type="PANTHER" id="PTHR11776:SF7">
    <property type="entry name" value="PHOSPHORIBOSYLTRANSFERASE DOMAIN-CONTAINING PROTEIN"/>
    <property type="match status" value="1"/>
</dbReference>
<dbReference type="Pfam" id="PF00156">
    <property type="entry name" value="Pribosyltran"/>
    <property type="match status" value="1"/>
</dbReference>
<dbReference type="SUPFAM" id="SSF53271">
    <property type="entry name" value="PRTase-like"/>
    <property type="match status" value="1"/>
</dbReference>
<dbReference type="PROSITE" id="PS00103">
    <property type="entry name" value="PUR_PYR_PR_TRANSFER"/>
    <property type="match status" value="1"/>
</dbReference>
<feature type="chain" id="PRO_1000000336" description="Adenine phosphoribosyltransferase">
    <location>
        <begin position="1"/>
        <end position="183"/>
    </location>
</feature>
<keyword id="KW-0963">Cytoplasm</keyword>
<keyword id="KW-0328">Glycosyltransferase</keyword>
<keyword id="KW-0660">Purine salvage</keyword>
<keyword id="KW-0808">Transferase</keyword>
<accession>Q57S81</accession>
<name>APT_SALCH</name>
<organism>
    <name type="scientific">Salmonella choleraesuis (strain SC-B67)</name>
    <dbReference type="NCBI Taxonomy" id="321314"/>
    <lineage>
        <taxon>Bacteria</taxon>
        <taxon>Pseudomonadati</taxon>
        <taxon>Pseudomonadota</taxon>
        <taxon>Gammaproteobacteria</taxon>
        <taxon>Enterobacterales</taxon>
        <taxon>Enterobacteriaceae</taxon>
        <taxon>Salmonella</taxon>
    </lineage>
</organism>
<sequence>MTATAQQLEFLKNSIKSIQDYPKPGILFRDVTSLLEDPKAYALSIELLVERYKNAGITKVVGTEARGFLFGAPVALGLGVGFVPVRKPRKLPRETIAETYELEYGTDQLEIHVDAIKPGDNVLVVDDLLATGGTIEATVKLIRRLGGKVTDAAFIINLFDLGGEQRLEKQGITCYSLVPFPGH</sequence>
<gene>
    <name evidence="1" type="primary">apt</name>
    <name type="ordered locus">SCH_0524</name>
</gene>
<proteinExistence type="inferred from homology"/>